<gene>
    <name type="primary">MT-CYB</name>
    <name type="synonym">COB</name>
    <name type="synonym">CYTB</name>
    <name type="synonym">MTCYB</name>
</gene>
<dbReference type="EMBL" id="AY292726">
    <property type="protein sequence ID" value="AAS54922.1"/>
    <property type="molecule type" value="Genomic_DNA"/>
</dbReference>
<dbReference type="GO" id="GO:0005743">
    <property type="term" value="C:mitochondrial inner membrane"/>
    <property type="evidence" value="ECO:0007669"/>
    <property type="project" value="UniProtKB-SubCell"/>
</dbReference>
<dbReference type="GO" id="GO:0045275">
    <property type="term" value="C:respiratory chain complex III"/>
    <property type="evidence" value="ECO:0007669"/>
    <property type="project" value="InterPro"/>
</dbReference>
<dbReference type="GO" id="GO:0046872">
    <property type="term" value="F:metal ion binding"/>
    <property type="evidence" value="ECO:0007669"/>
    <property type="project" value="UniProtKB-KW"/>
</dbReference>
<dbReference type="GO" id="GO:0008121">
    <property type="term" value="F:ubiquinol-cytochrome-c reductase activity"/>
    <property type="evidence" value="ECO:0007669"/>
    <property type="project" value="InterPro"/>
</dbReference>
<dbReference type="GO" id="GO:0006122">
    <property type="term" value="P:mitochondrial electron transport, ubiquinol to cytochrome c"/>
    <property type="evidence" value="ECO:0007669"/>
    <property type="project" value="TreeGrafter"/>
</dbReference>
<dbReference type="CDD" id="cd00290">
    <property type="entry name" value="cytochrome_b_C"/>
    <property type="match status" value="1"/>
</dbReference>
<dbReference type="CDD" id="cd00284">
    <property type="entry name" value="Cytochrome_b_N"/>
    <property type="match status" value="1"/>
</dbReference>
<dbReference type="FunFam" id="1.20.810.10:FF:000002">
    <property type="entry name" value="Cytochrome b"/>
    <property type="match status" value="1"/>
</dbReference>
<dbReference type="Gene3D" id="1.20.810.10">
    <property type="entry name" value="Cytochrome Bc1 Complex, Chain C"/>
    <property type="match status" value="1"/>
</dbReference>
<dbReference type="InterPro" id="IPR005798">
    <property type="entry name" value="Cyt_b/b6_C"/>
</dbReference>
<dbReference type="InterPro" id="IPR036150">
    <property type="entry name" value="Cyt_b/b6_C_sf"/>
</dbReference>
<dbReference type="InterPro" id="IPR005797">
    <property type="entry name" value="Cyt_b/b6_N"/>
</dbReference>
<dbReference type="InterPro" id="IPR027387">
    <property type="entry name" value="Cytb/b6-like_sf"/>
</dbReference>
<dbReference type="InterPro" id="IPR030689">
    <property type="entry name" value="Cytochrome_b"/>
</dbReference>
<dbReference type="InterPro" id="IPR048260">
    <property type="entry name" value="Cytochrome_b_C_euk/bac"/>
</dbReference>
<dbReference type="InterPro" id="IPR048259">
    <property type="entry name" value="Cytochrome_b_N_euk/bac"/>
</dbReference>
<dbReference type="InterPro" id="IPR016174">
    <property type="entry name" value="Di-haem_cyt_TM"/>
</dbReference>
<dbReference type="PANTHER" id="PTHR19271">
    <property type="entry name" value="CYTOCHROME B"/>
    <property type="match status" value="1"/>
</dbReference>
<dbReference type="PANTHER" id="PTHR19271:SF16">
    <property type="entry name" value="CYTOCHROME B"/>
    <property type="match status" value="1"/>
</dbReference>
<dbReference type="Pfam" id="PF00032">
    <property type="entry name" value="Cytochrom_B_C"/>
    <property type="match status" value="1"/>
</dbReference>
<dbReference type="Pfam" id="PF00033">
    <property type="entry name" value="Cytochrome_B"/>
    <property type="match status" value="1"/>
</dbReference>
<dbReference type="PIRSF" id="PIRSF038885">
    <property type="entry name" value="COB"/>
    <property type="match status" value="1"/>
</dbReference>
<dbReference type="SUPFAM" id="SSF81648">
    <property type="entry name" value="a domain/subunit of cytochrome bc1 complex (Ubiquinol-cytochrome c reductase)"/>
    <property type="match status" value="1"/>
</dbReference>
<dbReference type="SUPFAM" id="SSF81342">
    <property type="entry name" value="Transmembrane di-heme cytochromes"/>
    <property type="match status" value="1"/>
</dbReference>
<dbReference type="PROSITE" id="PS51003">
    <property type="entry name" value="CYTB_CTER"/>
    <property type="match status" value="1"/>
</dbReference>
<dbReference type="PROSITE" id="PS51002">
    <property type="entry name" value="CYTB_NTER"/>
    <property type="match status" value="1"/>
</dbReference>
<name>CYB_SYLAQ</name>
<feature type="chain" id="PRO_0000061623" description="Cytochrome b">
    <location>
        <begin position="1"/>
        <end position="379"/>
    </location>
</feature>
<feature type="transmembrane region" description="Helical" evidence="2">
    <location>
        <begin position="33"/>
        <end position="53"/>
    </location>
</feature>
<feature type="transmembrane region" description="Helical" evidence="2">
    <location>
        <begin position="77"/>
        <end position="98"/>
    </location>
</feature>
<feature type="transmembrane region" description="Helical" evidence="2">
    <location>
        <begin position="113"/>
        <end position="133"/>
    </location>
</feature>
<feature type="transmembrane region" description="Helical" evidence="2">
    <location>
        <begin position="178"/>
        <end position="198"/>
    </location>
</feature>
<feature type="transmembrane region" description="Helical" evidence="2">
    <location>
        <begin position="226"/>
        <end position="246"/>
    </location>
</feature>
<feature type="transmembrane region" description="Helical" evidence="2">
    <location>
        <begin position="288"/>
        <end position="308"/>
    </location>
</feature>
<feature type="transmembrane region" description="Helical" evidence="2">
    <location>
        <begin position="320"/>
        <end position="340"/>
    </location>
</feature>
<feature type="transmembrane region" description="Helical" evidence="2">
    <location>
        <begin position="347"/>
        <end position="367"/>
    </location>
</feature>
<feature type="binding site" description="axial binding residue" evidence="2">
    <location>
        <position position="83"/>
    </location>
    <ligand>
        <name>heme b</name>
        <dbReference type="ChEBI" id="CHEBI:60344"/>
        <label>b562</label>
    </ligand>
    <ligandPart>
        <name>Fe</name>
        <dbReference type="ChEBI" id="CHEBI:18248"/>
    </ligandPart>
</feature>
<feature type="binding site" description="axial binding residue" evidence="2">
    <location>
        <position position="97"/>
    </location>
    <ligand>
        <name>heme b</name>
        <dbReference type="ChEBI" id="CHEBI:60344"/>
        <label>b566</label>
    </ligand>
    <ligandPart>
        <name>Fe</name>
        <dbReference type="ChEBI" id="CHEBI:18248"/>
    </ligandPart>
</feature>
<feature type="binding site" description="axial binding residue" evidence="2">
    <location>
        <position position="182"/>
    </location>
    <ligand>
        <name>heme b</name>
        <dbReference type="ChEBI" id="CHEBI:60344"/>
        <label>b562</label>
    </ligand>
    <ligandPart>
        <name>Fe</name>
        <dbReference type="ChEBI" id="CHEBI:18248"/>
    </ligandPart>
</feature>
<feature type="binding site" description="axial binding residue" evidence="2">
    <location>
        <position position="196"/>
    </location>
    <ligand>
        <name>heme b</name>
        <dbReference type="ChEBI" id="CHEBI:60344"/>
        <label>b566</label>
    </ligand>
    <ligandPart>
        <name>Fe</name>
        <dbReference type="ChEBI" id="CHEBI:18248"/>
    </ligandPart>
</feature>
<feature type="binding site" evidence="2">
    <location>
        <position position="201"/>
    </location>
    <ligand>
        <name>a ubiquinone</name>
        <dbReference type="ChEBI" id="CHEBI:16389"/>
    </ligand>
</feature>
<proteinExistence type="inferred from homology"/>
<reference key="1">
    <citation type="journal article" date="2004" name="Syst. Biol.">
        <title>A molecular supermatrix of the rabbits and hares (Leporidae) allows for the identification of five intercontinental exchanges during the Miocene.</title>
        <authorList>
            <person name="Matthee C.A."/>
            <person name="van Vuuren B.J."/>
            <person name="Bell D."/>
            <person name="Robinson T.J."/>
        </authorList>
    </citation>
    <scope>NUCLEOTIDE SEQUENCE [GENOMIC DNA]</scope>
</reference>
<evidence type="ECO:0000250" key="1"/>
<evidence type="ECO:0000250" key="2">
    <source>
        <dbReference type="UniProtKB" id="P00157"/>
    </source>
</evidence>
<evidence type="ECO:0000255" key="3">
    <source>
        <dbReference type="PROSITE-ProRule" id="PRU00967"/>
    </source>
</evidence>
<evidence type="ECO:0000255" key="4">
    <source>
        <dbReference type="PROSITE-ProRule" id="PRU00968"/>
    </source>
</evidence>
<keyword id="KW-0249">Electron transport</keyword>
<keyword id="KW-0349">Heme</keyword>
<keyword id="KW-0408">Iron</keyword>
<keyword id="KW-0472">Membrane</keyword>
<keyword id="KW-0479">Metal-binding</keyword>
<keyword id="KW-0496">Mitochondrion</keyword>
<keyword id="KW-0999">Mitochondrion inner membrane</keyword>
<keyword id="KW-0679">Respiratory chain</keyword>
<keyword id="KW-0812">Transmembrane</keyword>
<keyword id="KW-1133">Transmembrane helix</keyword>
<keyword id="KW-0813">Transport</keyword>
<keyword id="KW-0830">Ubiquinone</keyword>
<organism>
    <name type="scientific">Sylvilagus aquaticus</name>
    <name type="common">Swamp rabbit</name>
    <name type="synonym">Lepus aquaticus</name>
    <dbReference type="NCBI Taxonomy" id="48090"/>
    <lineage>
        <taxon>Eukaryota</taxon>
        <taxon>Metazoa</taxon>
        <taxon>Chordata</taxon>
        <taxon>Craniata</taxon>
        <taxon>Vertebrata</taxon>
        <taxon>Euteleostomi</taxon>
        <taxon>Mammalia</taxon>
        <taxon>Eutheria</taxon>
        <taxon>Euarchontoglires</taxon>
        <taxon>Glires</taxon>
        <taxon>Lagomorpha</taxon>
        <taxon>Leporidae</taxon>
        <taxon>Sylvilagus</taxon>
    </lineage>
</organism>
<geneLocation type="mitochondrion"/>
<protein>
    <recommendedName>
        <fullName>Cytochrome b</fullName>
    </recommendedName>
    <alternativeName>
        <fullName>Complex III subunit 3</fullName>
    </alternativeName>
    <alternativeName>
        <fullName>Complex III subunit III</fullName>
    </alternativeName>
    <alternativeName>
        <fullName>Cytochrome b-c1 complex subunit 3</fullName>
    </alternativeName>
    <alternativeName>
        <fullName>Ubiquinol-cytochrome-c reductase complex cytochrome b subunit</fullName>
    </alternativeName>
</protein>
<sequence length="379" mass="42675">MTNIRKTHPLLKIVNHSLIDLPTPSNISAWWNFGSLLGLCLIIQILTGLFLAMHYTSDTLTAFSSVTHICRDVNYGWLIRYLHANGASMFFICLYMHVGRGIYYGSYTYLETWNIGIILLFAVMATAFMGYVLPWGQMFFWGATVITNLLSAIPYIGTTLVEWIWGGFSVDKATLTRFFAFHFILPFIIAALVMVHLLFLHETGSNNPSGIPSDSDKIPFHPYYTIKDALGFLALILLLLLLVLFSPDLLGDPDNYTPANPLNTPPHIKPEWYFLFAYAILRSIPNKLGGVLALVMSILILAIIPLLHXSKQRSMMFRPISQVLXWVLVADLLTLTWIGGQPVEXPFITIGQVASILYFSIILILMPLASLIENKILKW</sequence>
<comment type="function">
    <text evidence="2">Component of the ubiquinol-cytochrome c reductase complex (complex III or cytochrome b-c1 complex) that is part of the mitochondrial respiratory chain. The b-c1 complex mediates electron transfer from ubiquinol to cytochrome c. Contributes to the generation of a proton gradient across the mitochondrial membrane that is then used for ATP synthesis.</text>
</comment>
<comment type="cofactor">
    <cofactor evidence="2">
        <name>heme b</name>
        <dbReference type="ChEBI" id="CHEBI:60344"/>
    </cofactor>
    <text evidence="2">Binds 2 heme b groups non-covalently.</text>
</comment>
<comment type="subunit">
    <text evidence="2">The cytochrome bc1 complex contains 11 subunits: 3 respiratory subunits (MT-CYB, CYC1 and UQCRFS1), 2 core proteins (UQCRC1 and UQCRC2) and 6 low-molecular weight proteins (UQCRH/QCR6, UQCRB/QCR7, UQCRQ/QCR8, UQCR10/QCR9, UQCR11/QCR10 and a cleavage product of UQCRFS1). This cytochrome bc1 complex then forms a dimer.</text>
</comment>
<comment type="subcellular location">
    <subcellularLocation>
        <location evidence="2">Mitochondrion inner membrane</location>
        <topology evidence="2">Multi-pass membrane protein</topology>
    </subcellularLocation>
</comment>
<comment type="miscellaneous">
    <text evidence="1">Heme 1 (or BL or b562) is low-potential and absorbs at about 562 nm, and heme 2 (or BH or b566) is high-potential and absorbs at about 566 nm.</text>
</comment>
<comment type="similarity">
    <text evidence="3 4">Belongs to the cytochrome b family.</text>
</comment>
<comment type="caution">
    <text evidence="2">The full-length protein contains only eight transmembrane helices, not nine as predicted by bioinformatics tools.</text>
</comment>
<accession>Q6ELV8</accession>